<dbReference type="EMBL" id="AE014297">
    <property type="protein sequence ID" value="AAF56396.1"/>
    <property type="molecule type" value="Genomic_DNA"/>
</dbReference>
<dbReference type="EMBL" id="BT029152">
    <property type="protein sequence ID" value="ABJ17087.1"/>
    <property type="molecule type" value="mRNA"/>
</dbReference>
<dbReference type="EMBL" id="M96443">
    <property type="protein sequence ID" value="AAF02179.1"/>
    <property type="status" value="ALT_INIT"/>
    <property type="molecule type" value="Genomic_DNA"/>
</dbReference>
<dbReference type="RefSeq" id="NP_001287516.1">
    <property type="nucleotide sequence ID" value="NM_001300587.1"/>
</dbReference>
<dbReference type="RefSeq" id="NP_524495.1">
    <property type="nucleotide sequence ID" value="NM_079771.2"/>
</dbReference>
<dbReference type="SMR" id="P32028"/>
<dbReference type="BioGRID" id="67931">
    <property type="interactions" value="5"/>
</dbReference>
<dbReference type="FunCoup" id="P32028">
    <property type="interactions" value="1"/>
</dbReference>
<dbReference type="IntAct" id="P32028">
    <property type="interactions" value="5"/>
</dbReference>
<dbReference type="STRING" id="7227.FBpp0308353"/>
<dbReference type="PaxDb" id="7227-FBpp0084145"/>
<dbReference type="DNASU" id="43010"/>
<dbReference type="EnsemblMetazoa" id="FBtr0084770">
    <property type="protein sequence ID" value="FBpp0084145"/>
    <property type="gene ID" value="FBgn0004897"/>
</dbReference>
<dbReference type="EnsemblMetazoa" id="FBtr0339246">
    <property type="protein sequence ID" value="FBpp0308353"/>
    <property type="gene ID" value="FBgn0004897"/>
</dbReference>
<dbReference type="GeneID" id="43010"/>
<dbReference type="KEGG" id="dme:Dmel_CG11921"/>
<dbReference type="AGR" id="FB:FBgn0004897"/>
<dbReference type="CTD" id="43010"/>
<dbReference type="FlyBase" id="FBgn0004897">
    <property type="gene designation" value="fd96Ca"/>
</dbReference>
<dbReference type="VEuPathDB" id="VectorBase:FBgn0004897"/>
<dbReference type="eggNOG" id="KOG3562">
    <property type="taxonomic scope" value="Eukaryota"/>
</dbReference>
<dbReference type="GeneTree" id="ENSGT00940000161970"/>
<dbReference type="HOGENOM" id="CLU_040357_6_1_1"/>
<dbReference type="InParanoid" id="P32028"/>
<dbReference type="OMA" id="DKPEHHS"/>
<dbReference type="OrthoDB" id="5954824at2759"/>
<dbReference type="PhylomeDB" id="P32028"/>
<dbReference type="BioGRID-ORCS" id="43010">
    <property type="hits" value="0 hits in 3 CRISPR screens"/>
</dbReference>
<dbReference type="GenomeRNAi" id="43010"/>
<dbReference type="PRO" id="PR:P32028"/>
<dbReference type="Proteomes" id="UP000000803">
    <property type="component" value="Chromosome 3R"/>
</dbReference>
<dbReference type="Bgee" id="FBgn0004897">
    <property type="expression patterns" value="Expressed in maxillary sensory complex primordium (Drosophila) and 12 other cell types or tissues"/>
</dbReference>
<dbReference type="ExpressionAtlas" id="P32028">
    <property type="expression patterns" value="baseline and differential"/>
</dbReference>
<dbReference type="GO" id="GO:0005634">
    <property type="term" value="C:nucleus"/>
    <property type="evidence" value="ECO:0007669"/>
    <property type="project" value="UniProtKB-SubCell"/>
</dbReference>
<dbReference type="GO" id="GO:0000981">
    <property type="term" value="F:DNA-binding transcription factor activity, RNA polymerase II-specific"/>
    <property type="evidence" value="ECO:0000318"/>
    <property type="project" value="GO_Central"/>
</dbReference>
<dbReference type="GO" id="GO:0000978">
    <property type="term" value="F:RNA polymerase II cis-regulatory region sequence-specific DNA binding"/>
    <property type="evidence" value="ECO:0000318"/>
    <property type="project" value="GO_Central"/>
</dbReference>
<dbReference type="GO" id="GO:0009653">
    <property type="term" value="P:anatomical structure morphogenesis"/>
    <property type="evidence" value="ECO:0000318"/>
    <property type="project" value="GO_Central"/>
</dbReference>
<dbReference type="GO" id="GO:0030154">
    <property type="term" value="P:cell differentiation"/>
    <property type="evidence" value="ECO:0000318"/>
    <property type="project" value="GO_Central"/>
</dbReference>
<dbReference type="GO" id="GO:0006357">
    <property type="term" value="P:regulation of transcription by RNA polymerase II"/>
    <property type="evidence" value="ECO:0000318"/>
    <property type="project" value="GO_Central"/>
</dbReference>
<dbReference type="FunFam" id="1.10.10.10:FF:000082">
    <property type="entry name" value="forkhead box protein B2"/>
    <property type="match status" value="1"/>
</dbReference>
<dbReference type="Gene3D" id="1.10.10.10">
    <property type="entry name" value="Winged helix-like DNA-binding domain superfamily/Winged helix DNA-binding domain"/>
    <property type="match status" value="1"/>
</dbReference>
<dbReference type="InterPro" id="IPR001766">
    <property type="entry name" value="Fork_head_dom"/>
</dbReference>
<dbReference type="InterPro" id="IPR050211">
    <property type="entry name" value="FOX_domain-containing"/>
</dbReference>
<dbReference type="InterPro" id="IPR018122">
    <property type="entry name" value="TF_fork_head_CS_1"/>
</dbReference>
<dbReference type="InterPro" id="IPR030456">
    <property type="entry name" value="TF_fork_head_CS_2"/>
</dbReference>
<dbReference type="InterPro" id="IPR036388">
    <property type="entry name" value="WH-like_DNA-bd_sf"/>
</dbReference>
<dbReference type="InterPro" id="IPR036390">
    <property type="entry name" value="WH_DNA-bd_sf"/>
</dbReference>
<dbReference type="PANTHER" id="PTHR11829:SF377">
    <property type="entry name" value="FORK HEAD DOMAIN-CONTAINING PROTEIN FD4-RELATED"/>
    <property type="match status" value="1"/>
</dbReference>
<dbReference type="PANTHER" id="PTHR11829">
    <property type="entry name" value="FORKHEAD BOX PROTEIN"/>
    <property type="match status" value="1"/>
</dbReference>
<dbReference type="Pfam" id="PF00250">
    <property type="entry name" value="Forkhead"/>
    <property type="match status" value="1"/>
</dbReference>
<dbReference type="PRINTS" id="PR00053">
    <property type="entry name" value="FORKHEAD"/>
</dbReference>
<dbReference type="SMART" id="SM00339">
    <property type="entry name" value="FH"/>
    <property type="match status" value="1"/>
</dbReference>
<dbReference type="SUPFAM" id="SSF46785">
    <property type="entry name" value="Winged helix' DNA-binding domain"/>
    <property type="match status" value="1"/>
</dbReference>
<dbReference type="PROSITE" id="PS00657">
    <property type="entry name" value="FORK_HEAD_1"/>
    <property type="match status" value="1"/>
</dbReference>
<dbReference type="PROSITE" id="PS00658">
    <property type="entry name" value="FORK_HEAD_2"/>
    <property type="match status" value="1"/>
</dbReference>
<dbReference type="PROSITE" id="PS50039">
    <property type="entry name" value="FORK_HEAD_3"/>
    <property type="match status" value="1"/>
</dbReference>
<comment type="function">
    <text evidence="3">Involved in development during embryogenesis.</text>
</comment>
<comment type="subcellular location">
    <subcellularLocation>
        <location>Nucleus</location>
    </subcellularLocation>
</comment>
<comment type="tissue specificity">
    <text evidence="3">Expressed in early embryogenesis in 14 symmetrical pairs of segmentally arranged neuroblasts. Also, later in embryogenesis, in a cluster of cells in head region.</text>
</comment>
<comment type="developmental stage">
    <text evidence="3">Expressed in 5-12 hours embryos.</text>
</comment>
<comment type="sequence caution" evidence="4">
    <conflict type="erroneous initiation">
        <sequence resource="EMBL-CDS" id="AAF02179"/>
    </conflict>
</comment>
<accession>P32028</accession>
<accession>Q058R6</accession>
<accession>Q9VBY1</accession>
<proteinExistence type="evidence at transcript level"/>
<keyword id="KW-0217">Developmental protein</keyword>
<keyword id="KW-0238">DNA-binding</keyword>
<keyword id="KW-0539">Nucleus</keyword>
<keyword id="KW-1185">Reference proteome</keyword>
<keyword id="KW-0804">Transcription</keyword>
<keyword id="KW-0805">Transcription regulation</keyword>
<reference key="1">
    <citation type="journal article" date="2000" name="Science">
        <title>The genome sequence of Drosophila melanogaster.</title>
        <authorList>
            <person name="Adams M.D."/>
            <person name="Celniker S.E."/>
            <person name="Holt R.A."/>
            <person name="Evans C.A."/>
            <person name="Gocayne J.D."/>
            <person name="Amanatides P.G."/>
            <person name="Scherer S.E."/>
            <person name="Li P.W."/>
            <person name="Hoskins R.A."/>
            <person name="Galle R.F."/>
            <person name="George R.A."/>
            <person name="Lewis S.E."/>
            <person name="Richards S."/>
            <person name="Ashburner M."/>
            <person name="Henderson S.N."/>
            <person name="Sutton G.G."/>
            <person name="Wortman J.R."/>
            <person name="Yandell M.D."/>
            <person name="Zhang Q."/>
            <person name="Chen L.X."/>
            <person name="Brandon R.C."/>
            <person name="Rogers Y.-H.C."/>
            <person name="Blazej R.G."/>
            <person name="Champe M."/>
            <person name="Pfeiffer B.D."/>
            <person name="Wan K.H."/>
            <person name="Doyle C."/>
            <person name="Baxter E.G."/>
            <person name="Helt G."/>
            <person name="Nelson C.R."/>
            <person name="Miklos G.L.G."/>
            <person name="Abril J.F."/>
            <person name="Agbayani A."/>
            <person name="An H.-J."/>
            <person name="Andrews-Pfannkoch C."/>
            <person name="Baldwin D."/>
            <person name="Ballew R.M."/>
            <person name="Basu A."/>
            <person name="Baxendale J."/>
            <person name="Bayraktaroglu L."/>
            <person name="Beasley E.M."/>
            <person name="Beeson K.Y."/>
            <person name="Benos P.V."/>
            <person name="Berman B.P."/>
            <person name="Bhandari D."/>
            <person name="Bolshakov S."/>
            <person name="Borkova D."/>
            <person name="Botchan M.R."/>
            <person name="Bouck J."/>
            <person name="Brokstein P."/>
            <person name="Brottier P."/>
            <person name="Burtis K.C."/>
            <person name="Busam D.A."/>
            <person name="Butler H."/>
            <person name="Cadieu E."/>
            <person name="Center A."/>
            <person name="Chandra I."/>
            <person name="Cherry J.M."/>
            <person name="Cawley S."/>
            <person name="Dahlke C."/>
            <person name="Davenport L.B."/>
            <person name="Davies P."/>
            <person name="de Pablos B."/>
            <person name="Delcher A."/>
            <person name="Deng Z."/>
            <person name="Mays A.D."/>
            <person name="Dew I."/>
            <person name="Dietz S.M."/>
            <person name="Dodson K."/>
            <person name="Doup L.E."/>
            <person name="Downes M."/>
            <person name="Dugan-Rocha S."/>
            <person name="Dunkov B.C."/>
            <person name="Dunn P."/>
            <person name="Durbin K.J."/>
            <person name="Evangelista C.C."/>
            <person name="Ferraz C."/>
            <person name="Ferriera S."/>
            <person name="Fleischmann W."/>
            <person name="Fosler C."/>
            <person name="Gabrielian A.E."/>
            <person name="Garg N.S."/>
            <person name="Gelbart W.M."/>
            <person name="Glasser K."/>
            <person name="Glodek A."/>
            <person name="Gong F."/>
            <person name="Gorrell J.H."/>
            <person name="Gu Z."/>
            <person name="Guan P."/>
            <person name="Harris M."/>
            <person name="Harris N.L."/>
            <person name="Harvey D.A."/>
            <person name="Heiman T.J."/>
            <person name="Hernandez J.R."/>
            <person name="Houck J."/>
            <person name="Hostin D."/>
            <person name="Houston K.A."/>
            <person name="Howland T.J."/>
            <person name="Wei M.-H."/>
            <person name="Ibegwam C."/>
            <person name="Jalali M."/>
            <person name="Kalush F."/>
            <person name="Karpen G.H."/>
            <person name="Ke Z."/>
            <person name="Kennison J.A."/>
            <person name="Ketchum K.A."/>
            <person name="Kimmel B.E."/>
            <person name="Kodira C.D."/>
            <person name="Kraft C.L."/>
            <person name="Kravitz S."/>
            <person name="Kulp D."/>
            <person name="Lai Z."/>
            <person name="Lasko P."/>
            <person name="Lei Y."/>
            <person name="Levitsky A.A."/>
            <person name="Li J.H."/>
            <person name="Li Z."/>
            <person name="Liang Y."/>
            <person name="Lin X."/>
            <person name="Liu X."/>
            <person name="Mattei B."/>
            <person name="McIntosh T.C."/>
            <person name="McLeod M.P."/>
            <person name="McPherson D."/>
            <person name="Merkulov G."/>
            <person name="Milshina N.V."/>
            <person name="Mobarry C."/>
            <person name="Morris J."/>
            <person name="Moshrefi A."/>
            <person name="Mount S.M."/>
            <person name="Moy M."/>
            <person name="Murphy B."/>
            <person name="Murphy L."/>
            <person name="Muzny D.M."/>
            <person name="Nelson D.L."/>
            <person name="Nelson D.R."/>
            <person name="Nelson K.A."/>
            <person name="Nixon K."/>
            <person name="Nusskern D.R."/>
            <person name="Pacleb J.M."/>
            <person name="Palazzolo M."/>
            <person name="Pittman G.S."/>
            <person name="Pan S."/>
            <person name="Pollard J."/>
            <person name="Puri V."/>
            <person name="Reese M.G."/>
            <person name="Reinert K."/>
            <person name="Remington K."/>
            <person name="Saunders R.D.C."/>
            <person name="Scheeler F."/>
            <person name="Shen H."/>
            <person name="Shue B.C."/>
            <person name="Siden-Kiamos I."/>
            <person name="Simpson M."/>
            <person name="Skupski M.P."/>
            <person name="Smith T.J."/>
            <person name="Spier E."/>
            <person name="Spradling A.C."/>
            <person name="Stapleton M."/>
            <person name="Strong R."/>
            <person name="Sun E."/>
            <person name="Svirskas R."/>
            <person name="Tector C."/>
            <person name="Turner R."/>
            <person name="Venter E."/>
            <person name="Wang A.H."/>
            <person name="Wang X."/>
            <person name="Wang Z.-Y."/>
            <person name="Wassarman D.A."/>
            <person name="Weinstock G.M."/>
            <person name="Weissenbach J."/>
            <person name="Williams S.M."/>
            <person name="Woodage T."/>
            <person name="Worley K.C."/>
            <person name="Wu D."/>
            <person name="Yang S."/>
            <person name="Yao Q.A."/>
            <person name="Ye J."/>
            <person name="Yeh R.-F."/>
            <person name="Zaveri J.S."/>
            <person name="Zhan M."/>
            <person name="Zhang G."/>
            <person name="Zhao Q."/>
            <person name="Zheng L."/>
            <person name="Zheng X.H."/>
            <person name="Zhong F.N."/>
            <person name="Zhong W."/>
            <person name="Zhou X."/>
            <person name="Zhu S.C."/>
            <person name="Zhu X."/>
            <person name="Smith H.O."/>
            <person name="Gibbs R.A."/>
            <person name="Myers E.W."/>
            <person name="Rubin G.M."/>
            <person name="Venter J.C."/>
        </authorList>
    </citation>
    <scope>NUCLEOTIDE SEQUENCE [LARGE SCALE GENOMIC DNA]</scope>
    <source>
        <strain>Berkeley</strain>
    </source>
</reference>
<reference key="2">
    <citation type="journal article" date="2002" name="Genome Biol.">
        <title>Annotation of the Drosophila melanogaster euchromatic genome: a systematic review.</title>
        <authorList>
            <person name="Misra S."/>
            <person name="Crosby M.A."/>
            <person name="Mungall C.J."/>
            <person name="Matthews B.B."/>
            <person name="Campbell K.S."/>
            <person name="Hradecky P."/>
            <person name="Huang Y."/>
            <person name="Kaminker J.S."/>
            <person name="Millburn G.H."/>
            <person name="Prochnik S.E."/>
            <person name="Smith C.D."/>
            <person name="Tupy J.L."/>
            <person name="Whitfield E.J."/>
            <person name="Bayraktaroglu L."/>
            <person name="Berman B.P."/>
            <person name="Bettencourt B.R."/>
            <person name="Celniker S.E."/>
            <person name="de Grey A.D.N.J."/>
            <person name="Drysdale R.A."/>
            <person name="Harris N.L."/>
            <person name="Richter J."/>
            <person name="Russo S."/>
            <person name="Schroeder A.J."/>
            <person name="Shu S.Q."/>
            <person name="Stapleton M."/>
            <person name="Yamada C."/>
            <person name="Ashburner M."/>
            <person name="Gelbart W.M."/>
            <person name="Rubin G.M."/>
            <person name="Lewis S.E."/>
        </authorList>
    </citation>
    <scope>GENOME REANNOTATION</scope>
    <source>
        <strain>Berkeley</strain>
    </source>
</reference>
<reference key="3">
    <citation type="submission" date="2006-10" db="EMBL/GenBank/DDBJ databases">
        <authorList>
            <person name="Stapleton M."/>
            <person name="Carlson J.W."/>
            <person name="Frise E."/>
            <person name="Kapadia B."/>
            <person name="Park S."/>
            <person name="Wan K.H."/>
            <person name="Yu C."/>
            <person name="Celniker S.E."/>
        </authorList>
    </citation>
    <scope>NUCLEOTIDE SEQUENCE [LARGE SCALE MRNA]</scope>
    <source>
        <strain>Berkeley</strain>
        <tissue>Embryo</tissue>
    </source>
</reference>
<reference key="4">
    <citation type="journal article" date="1992" name="Proc. Natl. Acad. Sci. U.S.A.">
        <title>Developmentally regulated Drosophila gene family encoding the fork head domain.</title>
        <authorList>
            <person name="Haecker U."/>
            <person name="Grossniklaus U."/>
            <person name="Gehring W.J."/>
            <person name="Jaeckle H."/>
        </authorList>
    </citation>
    <scope>NUCLEOTIDE SEQUENCE [GENOMIC DNA] OF 1-125</scope>
    <scope>FUNCTION</scope>
    <scope>TISSUE SPECIFICITY</scope>
    <scope>DEVELOPMENTAL STAGE</scope>
</reference>
<feature type="chain" id="PRO_0000091912" description="Fork head domain-containing protein FD4">
    <location>
        <begin position="1"/>
        <end position="372"/>
    </location>
</feature>
<feature type="DNA-binding region" description="Fork-head" evidence="1">
    <location>
        <begin position="12"/>
        <end position="103"/>
    </location>
</feature>
<feature type="region of interest" description="Disordered" evidence="2">
    <location>
        <begin position="225"/>
        <end position="245"/>
    </location>
</feature>
<feature type="region of interest" description="Disordered" evidence="2">
    <location>
        <begin position="261"/>
        <end position="281"/>
    </location>
</feature>
<protein>
    <recommendedName>
        <fullName>Fork head domain-containing protein FD4</fullName>
    </recommendedName>
</protein>
<evidence type="ECO:0000255" key="1">
    <source>
        <dbReference type="PROSITE-ProRule" id="PRU00089"/>
    </source>
</evidence>
<evidence type="ECO:0000256" key="2">
    <source>
        <dbReference type="SAM" id="MobiDB-lite"/>
    </source>
</evidence>
<evidence type="ECO:0000269" key="3">
    <source>
    </source>
</evidence>
<evidence type="ECO:0000305" key="4"/>
<sequence length="372" mass="41723">MPRPSRESYGEQKPPYSYISLTAMAIWSSPEKMLPLSDIYKFITDRFPYYRKNTQRWQNSLRHNLSFNDCFIKVPRRPDRPGKGAYWALHPQAFDMFENGSLLRRRKRFKLHKNDKDLLNEELTALANLNRFFFTTRNGGSAAHMSPLDMNNAAAMRLDPLPRSTAHMPNSLGPGVPLPHVMPASMSGADHTNLADMGLTNLPALTSSEIEGPLSLRPKRSFTIESLITPDKPEHPSEDEDDEDDRVDIDVVECSGISRYPTTPAASEEYMSASRSSRTEDPLPPMHTINAGAHVPFLHYATGANVAGLPASGIPNSPTTYELAISHPLFMMAAPIANMHNIYYNNVTLVAPAQQYRSPEVQNRIDNDMRTI</sequence>
<gene>
    <name type="primary">fd96Ca</name>
    <name type="synonym">FD4</name>
    <name type="ORF">CG11921</name>
</gene>
<organism>
    <name type="scientific">Drosophila melanogaster</name>
    <name type="common">Fruit fly</name>
    <dbReference type="NCBI Taxonomy" id="7227"/>
    <lineage>
        <taxon>Eukaryota</taxon>
        <taxon>Metazoa</taxon>
        <taxon>Ecdysozoa</taxon>
        <taxon>Arthropoda</taxon>
        <taxon>Hexapoda</taxon>
        <taxon>Insecta</taxon>
        <taxon>Pterygota</taxon>
        <taxon>Neoptera</taxon>
        <taxon>Endopterygota</taxon>
        <taxon>Diptera</taxon>
        <taxon>Brachycera</taxon>
        <taxon>Muscomorpha</taxon>
        <taxon>Ephydroidea</taxon>
        <taxon>Drosophilidae</taxon>
        <taxon>Drosophila</taxon>
        <taxon>Sophophora</taxon>
    </lineage>
</organism>
<name>FD4_DROME</name>